<sequence>MYDFLRFFPENLPDLGFKSYVFMLEKPKGCGIVIRANSPEELRKKLRGVKRRAIVGIIGKEAVCREAVMRRRVDVILDWEDRELDYATLKLAAEKDVAIELSLSKFLRTEGYKRMHLFERLRQEIMVIRKFDVPFIVTTAAENQYELRTRKQVETFFKFFGAEIPKARLYAQRLVRRYFDENYIMDGFEVEQLSNSGVV</sequence>
<protein>
    <recommendedName>
        <fullName evidence="1">Ribonuclease P protein component 3</fullName>
        <shortName evidence="1">RNase P component 3</shortName>
        <ecNumber evidence="1">3.1.26.5</ecNumber>
    </recommendedName>
    <alternativeName>
        <fullName evidence="1">Rpp30</fullName>
    </alternativeName>
</protein>
<organism>
    <name type="scientific">Archaeoglobus fulgidus (strain ATCC 49558 / DSM 4304 / JCM 9628 / NBRC 100126 / VC-16)</name>
    <dbReference type="NCBI Taxonomy" id="224325"/>
    <lineage>
        <taxon>Archaea</taxon>
        <taxon>Methanobacteriati</taxon>
        <taxon>Methanobacteriota</taxon>
        <taxon>Archaeoglobi</taxon>
        <taxon>Archaeoglobales</taxon>
        <taxon>Archaeoglobaceae</taxon>
        <taxon>Archaeoglobus</taxon>
    </lineage>
</organism>
<proteinExistence type="inferred from homology"/>
<keyword id="KW-0963">Cytoplasm</keyword>
<keyword id="KW-0255">Endonuclease</keyword>
<keyword id="KW-0378">Hydrolase</keyword>
<keyword id="KW-0540">Nuclease</keyword>
<keyword id="KW-1185">Reference proteome</keyword>
<keyword id="KW-0819">tRNA processing</keyword>
<evidence type="ECO:0000255" key="1">
    <source>
        <dbReference type="HAMAP-Rule" id="MF_00756"/>
    </source>
</evidence>
<accession>O27967</accession>
<comment type="function">
    <text evidence="1">Part of ribonuclease P, a protein complex that generates mature tRNA molecules by cleaving their 5'-ends.</text>
</comment>
<comment type="catalytic activity">
    <reaction evidence="1">
        <text>Endonucleolytic cleavage of RNA, removing 5'-extranucleotides from tRNA precursor.</text>
        <dbReference type="EC" id="3.1.26.5"/>
    </reaction>
</comment>
<comment type="subunit">
    <text evidence="1">Consists of a catalytic RNA component and at least 4-5 protein subunits.</text>
</comment>
<comment type="subcellular location">
    <subcellularLocation>
        <location evidence="1">Cytoplasm</location>
    </subcellularLocation>
</comment>
<comment type="similarity">
    <text evidence="1">Belongs to the eukaryotic/archaeal RNase P protein component 3 family.</text>
</comment>
<dbReference type="EC" id="3.1.26.5" evidence="1"/>
<dbReference type="EMBL" id="AE000782">
    <property type="protein sequence ID" value="AAB88939.1"/>
    <property type="molecule type" value="Genomic_DNA"/>
</dbReference>
<dbReference type="PIR" id="E69539">
    <property type="entry name" value="E69539"/>
</dbReference>
<dbReference type="RefSeq" id="WP_010879806.1">
    <property type="nucleotide sequence ID" value="NC_000917.1"/>
</dbReference>
<dbReference type="SMR" id="O27967"/>
<dbReference type="STRING" id="224325.AF_2317"/>
<dbReference type="PaxDb" id="224325-AF_2317"/>
<dbReference type="EnsemblBacteria" id="AAB88939">
    <property type="protein sequence ID" value="AAB88939"/>
    <property type="gene ID" value="AF_2317"/>
</dbReference>
<dbReference type="KEGG" id="afu:AF_2317"/>
<dbReference type="eggNOG" id="arCOG00307">
    <property type="taxonomic scope" value="Archaea"/>
</dbReference>
<dbReference type="HOGENOM" id="CLU_1369450_0_0_2"/>
<dbReference type="OrthoDB" id="50463at2157"/>
<dbReference type="PhylomeDB" id="O27967"/>
<dbReference type="Proteomes" id="UP000002199">
    <property type="component" value="Chromosome"/>
</dbReference>
<dbReference type="GO" id="GO:0005737">
    <property type="term" value="C:cytoplasm"/>
    <property type="evidence" value="ECO:0007669"/>
    <property type="project" value="UniProtKB-SubCell"/>
</dbReference>
<dbReference type="GO" id="GO:0030677">
    <property type="term" value="C:ribonuclease P complex"/>
    <property type="evidence" value="ECO:0007669"/>
    <property type="project" value="UniProtKB-UniRule"/>
</dbReference>
<dbReference type="GO" id="GO:0004526">
    <property type="term" value="F:ribonuclease P activity"/>
    <property type="evidence" value="ECO:0007669"/>
    <property type="project" value="UniProtKB-UniRule"/>
</dbReference>
<dbReference type="GO" id="GO:0001682">
    <property type="term" value="P:tRNA 5'-leader removal"/>
    <property type="evidence" value="ECO:0007669"/>
    <property type="project" value="UniProtKB-UniRule"/>
</dbReference>
<dbReference type="Gene3D" id="3.20.20.140">
    <property type="entry name" value="Metal-dependent hydrolases"/>
    <property type="match status" value="1"/>
</dbReference>
<dbReference type="HAMAP" id="MF_00756">
    <property type="entry name" value="RNase_P_3"/>
    <property type="match status" value="1"/>
</dbReference>
<dbReference type="InterPro" id="IPR016195">
    <property type="entry name" value="Pol/histidinol_Pase-like"/>
</dbReference>
<dbReference type="InterPro" id="IPR023539">
    <property type="entry name" value="RNase_P_comp-3_arc"/>
</dbReference>
<dbReference type="InterPro" id="IPR002738">
    <property type="entry name" value="RNase_P_p30"/>
</dbReference>
<dbReference type="Pfam" id="PF01876">
    <property type="entry name" value="RNase_P_p30"/>
    <property type="match status" value="1"/>
</dbReference>
<dbReference type="SUPFAM" id="SSF89550">
    <property type="entry name" value="PHP domain-like"/>
    <property type="match status" value="1"/>
</dbReference>
<name>RNP3_ARCFU</name>
<gene>
    <name evidence="1" type="primary">rnp3</name>
    <name type="ordered locus">AF_2317</name>
</gene>
<feature type="chain" id="PRO_0000140036" description="Ribonuclease P protein component 3">
    <location>
        <begin position="1"/>
        <end position="199"/>
    </location>
</feature>
<reference key="1">
    <citation type="journal article" date="1997" name="Nature">
        <title>The complete genome sequence of the hyperthermophilic, sulphate-reducing archaeon Archaeoglobus fulgidus.</title>
        <authorList>
            <person name="Klenk H.-P."/>
            <person name="Clayton R.A."/>
            <person name="Tomb J.-F."/>
            <person name="White O."/>
            <person name="Nelson K.E."/>
            <person name="Ketchum K.A."/>
            <person name="Dodson R.J."/>
            <person name="Gwinn M.L."/>
            <person name="Hickey E.K."/>
            <person name="Peterson J.D."/>
            <person name="Richardson D.L."/>
            <person name="Kerlavage A.R."/>
            <person name="Graham D.E."/>
            <person name="Kyrpides N.C."/>
            <person name="Fleischmann R.D."/>
            <person name="Quackenbush J."/>
            <person name="Lee N.H."/>
            <person name="Sutton G.G."/>
            <person name="Gill S.R."/>
            <person name="Kirkness E.F."/>
            <person name="Dougherty B.A."/>
            <person name="McKenney K."/>
            <person name="Adams M.D."/>
            <person name="Loftus B.J."/>
            <person name="Peterson S.N."/>
            <person name="Reich C.I."/>
            <person name="McNeil L.K."/>
            <person name="Badger J.H."/>
            <person name="Glodek A."/>
            <person name="Zhou L."/>
            <person name="Overbeek R."/>
            <person name="Gocayne J.D."/>
            <person name="Weidman J.F."/>
            <person name="McDonald L.A."/>
            <person name="Utterback T.R."/>
            <person name="Cotton M.D."/>
            <person name="Spriggs T."/>
            <person name="Artiach P."/>
            <person name="Kaine B.P."/>
            <person name="Sykes S.M."/>
            <person name="Sadow P.W."/>
            <person name="D'Andrea K.P."/>
            <person name="Bowman C."/>
            <person name="Fujii C."/>
            <person name="Garland S.A."/>
            <person name="Mason T.M."/>
            <person name="Olsen G.J."/>
            <person name="Fraser C.M."/>
            <person name="Smith H.O."/>
            <person name="Woese C.R."/>
            <person name="Venter J.C."/>
        </authorList>
    </citation>
    <scope>NUCLEOTIDE SEQUENCE [LARGE SCALE GENOMIC DNA]</scope>
    <source>
        <strain>ATCC 49558 / DSM 4304 / JCM 9628 / NBRC 100126 / VC-16</strain>
    </source>
</reference>